<comment type="function">
    <text evidence="1">Catalyzes the decarboxylation of S-adenosylmethionine to S-adenosylmethioninamine (dcAdoMet), the propylamine donor required for the synthesis of the polyamines spermine and spermidine from the diamine putrescine.</text>
</comment>
<comment type="catalytic activity">
    <reaction evidence="1">
        <text>S-adenosyl-L-methionine + H(+) = S-adenosyl 3-(methylsulfanyl)propylamine + CO2</text>
        <dbReference type="Rhea" id="RHEA:15981"/>
        <dbReference type="ChEBI" id="CHEBI:15378"/>
        <dbReference type="ChEBI" id="CHEBI:16526"/>
        <dbReference type="ChEBI" id="CHEBI:57443"/>
        <dbReference type="ChEBI" id="CHEBI:59789"/>
        <dbReference type="EC" id="4.1.1.50"/>
    </reaction>
</comment>
<comment type="cofactor">
    <cofactor evidence="1">
        <name>pyruvate</name>
        <dbReference type="ChEBI" id="CHEBI:15361"/>
    </cofactor>
    <text evidence="1">Binds 1 pyruvoyl group covalently per subunit.</text>
</comment>
<comment type="pathway">
    <text evidence="1">Amine and polyamine biosynthesis; S-adenosylmethioninamine biosynthesis; S-adenosylmethioninamine from S-adenosyl-L-methionine: step 1/1.</text>
</comment>
<comment type="subunit">
    <text evidence="1">Heterotetramer of two alpha and two beta chains arranged as a dimer of alpha/beta heterodimers.</text>
</comment>
<comment type="PTM">
    <text evidence="1">Is synthesized initially as an inactive proenzyme. Formation of the active enzyme involves a self-maturation process in which the active site pyruvoyl group is generated from an internal serine residue via an autocatalytic post-translational modification. Two non-identical subunits are generated from the proenzyme in this reaction, and the pyruvate is formed at the N-terminus of the alpha chain, which is derived from the carboxyl end of the proenzyme. The post-translation cleavage follows an unusual pathway, termed non-hydrolytic serinolysis, in which the side chain hydroxyl group of the serine supplies its oxygen atom to form the C-terminus of the beta chain, while the remainder of the serine residue undergoes an oxidative deamination to produce ammonia and the pyruvoyl group blocking the N-terminus of the alpha chain.</text>
</comment>
<comment type="similarity">
    <text evidence="1">Belongs to the prokaryotic AdoMetDC family. Type 1 subfamily.</text>
</comment>
<sequence length="126" mass="14019">MQSLGRHVLAEIYGCRFEVLNDVKKVEDIMVNAALEAGAEIREFVFHKFSPQGVSGVVVISESHLAIHTWPELGYAALDVFTCGDRVNPWDACNYVAEMFSAGDMKASEVKRGLMEQPEERLVANM</sequence>
<organism>
    <name type="scientific">Syntrophomonas wolfei subsp. wolfei (strain DSM 2245B / Goettingen)</name>
    <dbReference type="NCBI Taxonomy" id="335541"/>
    <lineage>
        <taxon>Bacteria</taxon>
        <taxon>Bacillati</taxon>
        <taxon>Bacillota</taxon>
        <taxon>Clostridia</taxon>
        <taxon>Eubacteriales</taxon>
        <taxon>Syntrophomonadaceae</taxon>
        <taxon>Syntrophomonas</taxon>
    </lineage>
</organism>
<proteinExistence type="inferred from homology"/>
<name>SPEH_SYNWW</name>
<protein>
    <recommendedName>
        <fullName evidence="1">S-adenosylmethionine decarboxylase proenzyme</fullName>
        <shortName evidence="1">AdoMetDC</shortName>
        <shortName evidence="1">SAMDC</shortName>
        <ecNumber evidence="1">4.1.1.50</ecNumber>
    </recommendedName>
    <component>
        <recommendedName>
            <fullName evidence="1">S-adenosylmethionine decarboxylase beta chain</fullName>
        </recommendedName>
    </component>
    <component>
        <recommendedName>
            <fullName evidence="1">S-adenosylmethionine decarboxylase alpha chain</fullName>
        </recommendedName>
    </component>
</protein>
<gene>
    <name evidence="1" type="primary">speH</name>
    <name type="ordered locus">Swol_0674</name>
</gene>
<keyword id="KW-0068">Autocatalytic cleavage</keyword>
<keyword id="KW-0210">Decarboxylase</keyword>
<keyword id="KW-0456">Lyase</keyword>
<keyword id="KW-0620">Polyamine biosynthesis</keyword>
<keyword id="KW-0670">Pyruvate</keyword>
<keyword id="KW-1185">Reference proteome</keyword>
<keyword id="KW-0949">S-adenosyl-L-methionine</keyword>
<keyword id="KW-0704">Schiff base</keyword>
<keyword id="KW-0745">Spermidine biosynthesis</keyword>
<keyword id="KW-0865">Zymogen</keyword>
<reference key="1">
    <citation type="journal article" date="2010" name="Environ. Microbiol.">
        <title>The genome of Syntrophomonas wolfei: new insights into syntrophic metabolism and biohydrogen production.</title>
        <authorList>
            <person name="Sieber J.R."/>
            <person name="Sims D.R."/>
            <person name="Han C."/>
            <person name="Kim E."/>
            <person name="Lykidis A."/>
            <person name="Lapidus A.L."/>
            <person name="McDonnald E."/>
            <person name="Rohlin L."/>
            <person name="Culley D.E."/>
            <person name="Gunsalus R."/>
            <person name="McInerney M.J."/>
        </authorList>
    </citation>
    <scope>NUCLEOTIDE SEQUENCE [LARGE SCALE GENOMIC DNA]</scope>
    <source>
        <strain>DSM 2245B / Goettingen</strain>
    </source>
</reference>
<evidence type="ECO:0000255" key="1">
    <source>
        <dbReference type="HAMAP-Rule" id="MF_00464"/>
    </source>
</evidence>
<dbReference type="EC" id="4.1.1.50" evidence="1"/>
<dbReference type="EMBL" id="CP000448">
    <property type="protein sequence ID" value="ABI68001.1"/>
    <property type="molecule type" value="Genomic_DNA"/>
</dbReference>
<dbReference type="RefSeq" id="WP_011640106.1">
    <property type="nucleotide sequence ID" value="NC_008346.1"/>
</dbReference>
<dbReference type="SMR" id="Q0AZ53"/>
<dbReference type="STRING" id="335541.Swol_0674"/>
<dbReference type="KEGG" id="swo:Swol_0674"/>
<dbReference type="eggNOG" id="COG1586">
    <property type="taxonomic scope" value="Bacteria"/>
</dbReference>
<dbReference type="HOGENOM" id="CLU_125470_2_3_9"/>
<dbReference type="OrthoDB" id="9793120at2"/>
<dbReference type="UniPathway" id="UPA00331">
    <property type="reaction ID" value="UER00451"/>
</dbReference>
<dbReference type="Proteomes" id="UP000001968">
    <property type="component" value="Chromosome"/>
</dbReference>
<dbReference type="GO" id="GO:0005829">
    <property type="term" value="C:cytosol"/>
    <property type="evidence" value="ECO:0007669"/>
    <property type="project" value="TreeGrafter"/>
</dbReference>
<dbReference type="GO" id="GO:0004014">
    <property type="term" value="F:adenosylmethionine decarboxylase activity"/>
    <property type="evidence" value="ECO:0007669"/>
    <property type="project" value="UniProtKB-UniRule"/>
</dbReference>
<dbReference type="GO" id="GO:0008295">
    <property type="term" value="P:spermidine biosynthetic process"/>
    <property type="evidence" value="ECO:0007669"/>
    <property type="project" value="UniProtKB-UniRule"/>
</dbReference>
<dbReference type="FunFam" id="3.30.360.110:FF:000001">
    <property type="entry name" value="S-adenosylmethionine decarboxylase proenzyme"/>
    <property type="match status" value="1"/>
</dbReference>
<dbReference type="Gene3D" id="3.30.160.750">
    <property type="match status" value="1"/>
</dbReference>
<dbReference type="Gene3D" id="3.30.360.110">
    <property type="entry name" value="S-adenosylmethionine decarboxylase domain"/>
    <property type="match status" value="1"/>
</dbReference>
<dbReference type="HAMAP" id="MF_00464">
    <property type="entry name" value="AdoMetDC_1"/>
    <property type="match status" value="1"/>
</dbReference>
<dbReference type="InterPro" id="IPR042286">
    <property type="entry name" value="AdoMetDC_C"/>
</dbReference>
<dbReference type="InterPro" id="IPR003826">
    <property type="entry name" value="AdoMetDC_fam_prok"/>
</dbReference>
<dbReference type="InterPro" id="IPR042284">
    <property type="entry name" value="AdoMetDC_N"/>
</dbReference>
<dbReference type="InterPro" id="IPR016067">
    <property type="entry name" value="S-AdoMet_deCO2ase_core"/>
</dbReference>
<dbReference type="InterPro" id="IPR017716">
    <property type="entry name" value="S-AdoMet_deCOase_pro-enz"/>
</dbReference>
<dbReference type="NCBIfam" id="TIGR03330">
    <property type="entry name" value="SAM_DCase_Bsu"/>
    <property type="match status" value="1"/>
</dbReference>
<dbReference type="PANTHER" id="PTHR33866">
    <property type="entry name" value="S-ADENOSYLMETHIONINE DECARBOXYLASE PROENZYME"/>
    <property type="match status" value="1"/>
</dbReference>
<dbReference type="PANTHER" id="PTHR33866:SF2">
    <property type="entry name" value="S-ADENOSYLMETHIONINE DECARBOXYLASE PROENZYME"/>
    <property type="match status" value="1"/>
</dbReference>
<dbReference type="Pfam" id="PF02675">
    <property type="entry name" value="AdoMet_dc"/>
    <property type="match status" value="1"/>
</dbReference>
<dbReference type="SUPFAM" id="SSF56276">
    <property type="entry name" value="S-adenosylmethionine decarboxylase"/>
    <property type="match status" value="1"/>
</dbReference>
<feature type="chain" id="PRO_1000013685" description="S-adenosylmethionine decarboxylase beta chain" evidence="1">
    <location>
        <begin position="1"/>
        <end position="62"/>
    </location>
</feature>
<feature type="chain" id="PRO_0000315034" description="S-adenosylmethionine decarboxylase alpha chain" evidence="1">
    <location>
        <begin position="63"/>
        <end position="126"/>
    </location>
</feature>
<feature type="active site" description="Schiff-base intermediate with substrate; via pyruvic acid" evidence="1">
    <location>
        <position position="63"/>
    </location>
</feature>
<feature type="active site" description="Proton acceptor; for processing activity" evidence="1">
    <location>
        <position position="68"/>
    </location>
</feature>
<feature type="active site" description="Proton donor; for catalytic activity" evidence="1">
    <location>
        <position position="83"/>
    </location>
</feature>
<feature type="site" description="Cleavage (non-hydrolytic); by autolysis" evidence="1">
    <location>
        <begin position="62"/>
        <end position="63"/>
    </location>
</feature>
<feature type="modified residue" description="Pyruvic acid (Ser); by autocatalysis" evidence="1">
    <location>
        <position position="63"/>
    </location>
</feature>
<accession>Q0AZ53</accession>